<keyword id="KW-0350">Heme biosynthesis</keyword>
<keyword id="KW-0456">Lyase</keyword>
<keyword id="KW-0479">Metal-binding</keyword>
<keyword id="KW-0627">Porphyrin biosynthesis</keyword>
<keyword id="KW-1185">Reference proteome</keyword>
<keyword id="KW-0862">Zinc</keyword>
<feature type="chain" id="PRO_0000140531" description="Delta-aminolevulinic acid dehydratase">
    <location>
        <begin position="1"/>
        <end position="340"/>
    </location>
</feature>
<feature type="active site" description="Schiff-base intermediate with substrate" evidence="1">
    <location>
        <position position="211"/>
    </location>
</feature>
<feature type="active site" description="Schiff-base intermediate with substrate" evidence="1">
    <location>
        <position position="264"/>
    </location>
</feature>
<feature type="binding site" evidence="1">
    <location>
        <position position="134"/>
    </location>
    <ligand>
        <name>Zn(2+)</name>
        <dbReference type="ChEBI" id="CHEBI:29105"/>
        <note>catalytic</note>
    </ligand>
</feature>
<feature type="binding site" evidence="1">
    <location>
        <position position="136"/>
    </location>
    <ligand>
        <name>Zn(2+)</name>
        <dbReference type="ChEBI" id="CHEBI:29105"/>
        <note>catalytic</note>
    </ligand>
</feature>
<feature type="binding site" evidence="1">
    <location>
        <position position="144"/>
    </location>
    <ligand>
        <name>Zn(2+)</name>
        <dbReference type="ChEBI" id="CHEBI:29105"/>
        <note>catalytic</note>
    </ligand>
</feature>
<feature type="binding site" evidence="1">
    <location>
        <position position="221"/>
    </location>
    <ligand>
        <name>5-aminolevulinate</name>
        <dbReference type="ChEBI" id="CHEBI:356416"/>
        <label>1</label>
    </ligand>
</feature>
<feature type="binding site" evidence="1">
    <location>
        <position position="233"/>
    </location>
    <ligand>
        <name>5-aminolevulinate</name>
        <dbReference type="ChEBI" id="CHEBI:356416"/>
        <label>1</label>
    </ligand>
</feature>
<feature type="binding site" evidence="1">
    <location>
        <position position="291"/>
    </location>
    <ligand>
        <name>5-aminolevulinate</name>
        <dbReference type="ChEBI" id="CHEBI:356416"/>
        <label>2</label>
    </ligand>
</feature>
<feature type="binding site" evidence="1">
    <location>
        <position position="330"/>
    </location>
    <ligand>
        <name>5-aminolevulinate</name>
        <dbReference type="ChEBI" id="CHEBI:356416"/>
        <label>2</label>
    </ligand>
</feature>
<sequence length="340" mass="37331">MKHTAEFLDTHQTQISSILSGGYNHPLLREWQNERQLAKNMFIFPLFVSDMPDEDQPIESLPNIRRFGVNKLAGYLKPLVAKGLRAVLLFGVPMKPNSKDEFGSAADDPEGPVIQAIKLLRAEFPELYILCDVCLCEYTSHGHCGVLYDDGSINREQSVRRLAAVAVNYAKAGAHSVAPSDMIDGRIRDIKLGLLAAGLAHKTFVMSYAAKFSGNLYGPFRDAACSAPSQGDRKCYQLPSGGRGLARRALRRDLDEGADGIIVKPSTFYLDIMADASEIAKDVPICAYHVSGEYAMLHAAAKAGVVDFKSIAFESHQGFLRAGARLIISYMTPEFLDWLS</sequence>
<evidence type="ECO:0000250" key="1"/>
<evidence type="ECO:0000305" key="2"/>
<name>HEM2_EREGS</name>
<organism>
    <name type="scientific">Eremothecium gossypii (strain ATCC 10895 / CBS 109.51 / FGSC 9923 / NRRL Y-1056)</name>
    <name type="common">Yeast</name>
    <name type="synonym">Ashbya gossypii</name>
    <dbReference type="NCBI Taxonomy" id="284811"/>
    <lineage>
        <taxon>Eukaryota</taxon>
        <taxon>Fungi</taxon>
        <taxon>Dikarya</taxon>
        <taxon>Ascomycota</taxon>
        <taxon>Saccharomycotina</taxon>
        <taxon>Saccharomycetes</taxon>
        <taxon>Saccharomycetales</taxon>
        <taxon>Saccharomycetaceae</taxon>
        <taxon>Eremothecium</taxon>
    </lineage>
</organism>
<proteinExistence type="inferred from homology"/>
<comment type="function">
    <text evidence="1">Catalyzes an early step in the biosynthesis of tetrapyrroles. Binds two molecules of 5-aminolevulinate per subunit, each at a distinct site, and catalyzes their condensation to form porphobilinogen (By similarity).</text>
</comment>
<comment type="catalytic activity">
    <reaction>
        <text>2 5-aminolevulinate = porphobilinogen + 2 H2O + H(+)</text>
        <dbReference type="Rhea" id="RHEA:24064"/>
        <dbReference type="ChEBI" id="CHEBI:15377"/>
        <dbReference type="ChEBI" id="CHEBI:15378"/>
        <dbReference type="ChEBI" id="CHEBI:58126"/>
        <dbReference type="ChEBI" id="CHEBI:356416"/>
        <dbReference type="EC" id="4.2.1.24"/>
    </reaction>
</comment>
<comment type="cofactor">
    <cofactor evidence="1">
        <name>Zn(2+)</name>
        <dbReference type="ChEBI" id="CHEBI:29105"/>
    </cofactor>
    <text evidence="1">Binds 1 zinc ion per monomer.</text>
</comment>
<comment type="pathway">
    <text>Porphyrin-containing compound metabolism; protoporphyrin-IX biosynthesis; coproporphyrinogen-III from 5-aminolevulinate: step 1/4.</text>
</comment>
<comment type="subunit">
    <text evidence="1">Homooctamer.</text>
</comment>
<comment type="similarity">
    <text evidence="2">Belongs to the ALAD family.</text>
</comment>
<reference key="1">
    <citation type="journal article" date="2004" name="Science">
        <title>The Ashbya gossypii genome as a tool for mapping the ancient Saccharomyces cerevisiae genome.</title>
        <authorList>
            <person name="Dietrich F.S."/>
            <person name="Voegeli S."/>
            <person name="Brachat S."/>
            <person name="Lerch A."/>
            <person name="Gates K."/>
            <person name="Steiner S."/>
            <person name="Mohr C."/>
            <person name="Poehlmann R."/>
            <person name="Luedi P."/>
            <person name="Choi S."/>
            <person name="Wing R.A."/>
            <person name="Flavier A."/>
            <person name="Gaffney T.D."/>
            <person name="Philippsen P."/>
        </authorList>
    </citation>
    <scope>NUCLEOTIDE SEQUENCE [LARGE SCALE GENOMIC DNA]</scope>
    <source>
        <strain>ATCC 10895 / CBS 109.51 / FGSC 9923 / NRRL Y-1056</strain>
    </source>
</reference>
<reference key="2">
    <citation type="journal article" date="2013" name="G3 (Bethesda)">
        <title>Genomes of Ashbya fungi isolated from insects reveal four mating-type loci, numerous translocations, lack of transposons, and distinct gene duplications.</title>
        <authorList>
            <person name="Dietrich F.S."/>
            <person name="Voegeli S."/>
            <person name="Kuo S."/>
            <person name="Philippsen P."/>
        </authorList>
    </citation>
    <scope>GENOME REANNOTATION</scope>
    <source>
        <strain>ATCC 10895 / CBS 109.51 / FGSC 9923 / NRRL Y-1056</strain>
    </source>
</reference>
<dbReference type="EC" id="4.2.1.24"/>
<dbReference type="EMBL" id="AE016820">
    <property type="protein sequence ID" value="AAS54504.1"/>
    <property type="molecule type" value="Genomic_DNA"/>
</dbReference>
<dbReference type="RefSeq" id="NP_986680.1">
    <property type="nucleotide sequence ID" value="NM_211742.1"/>
</dbReference>
<dbReference type="SMR" id="Q750E0"/>
<dbReference type="FunCoup" id="Q750E0">
    <property type="interactions" value="639"/>
</dbReference>
<dbReference type="STRING" id="284811.Q750E0"/>
<dbReference type="EnsemblFungi" id="AAS54504">
    <property type="protein sequence ID" value="AAS54504"/>
    <property type="gene ID" value="AGOS_AGR015C"/>
</dbReference>
<dbReference type="GeneID" id="4622979"/>
<dbReference type="KEGG" id="ago:AGOS_AGR015C"/>
<dbReference type="eggNOG" id="KOG2794">
    <property type="taxonomic scope" value="Eukaryota"/>
</dbReference>
<dbReference type="HOGENOM" id="CLU_035731_0_1_1"/>
<dbReference type="InParanoid" id="Q750E0"/>
<dbReference type="OMA" id="YQMDYAN"/>
<dbReference type="OrthoDB" id="1530at2759"/>
<dbReference type="UniPathway" id="UPA00251">
    <property type="reaction ID" value="UER00318"/>
</dbReference>
<dbReference type="Proteomes" id="UP000000591">
    <property type="component" value="Chromosome VII"/>
</dbReference>
<dbReference type="GO" id="GO:0005829">
    <property type="term" value="C:cytosol"/>
    <property type="evidence" value="ECO:0000318"/>
    <property type="project" value="GO_Central"/>
</dbReference>
<dbReference type="GO" id="GO:0004655">
    <property type="term" value="F:porphobilinogen synthase activity"/>
    <property type="evidence" value="ECO:0000250"/>
    <property type="project" value="UniProtKB"/>
</dbReference>
<dbReference type="GO" id="GO:0008270">
    <property type="term" value="F:zinc ion binding"/>
    <property type="evidence" value="ECO:0000250"/>
    <property type="project" value="UniProtKB"/>
</dbReference>
<dbReference type="GO" id="GO:0006783">
    <property type="term" value="P:heme biosynthetic process"/>
    <property type="evidence" value="ECO:0000250"/>
    <property type="project" value="UniProtKB"/>
</dbReference>
<dbReference type="GO" id="GO:0006782">
    <property type="term" value="P:protoporphyrinogen IX biosynthetic process"/>
    <property type="evidence" value="ECO:0007669"/>
    <property type="project" value="UniProtKB-UniPathway"/>
</dbReference>
<dbReference type="FunFam" id="3.20.20.70:FF:000048">
    <property type="entry name" value="Delta-aminolevulinic acid dehydratase"/>
    <property type="match status" value="1"/>
</dbReference>
<dbReference type="Gene3D" id="3.20.20.70">
    <property type="entry name" value="Aldolase class I"/>
    <property type="match status" value="1"/>
</dbReference>
<dbReference type="InterPro" id="IPR001731">
    <property type="entry name" value="ALAD"/>
</dbReference>
<dbReference type="InterPro" id="IPR030656">
    <property type="entry name" value="ALAD_AS"/>
</dbReference>
<dbReference type="InterPro" id="IPR013785">
    <property type="entry name" value="Aldolase_TIM"/>
</dbReference>
<dbReference type="NCBIfam" id="NF006762">
    <property type="entry name" value="PRK09283.1"/>
    <property type="match status" value="1"/>
</dbReference>
<dbReference type="PANTHER" id="PTHR11458">
    <property type="entry name" value="DELTA-AMINOLEVULINIC ACID DEHYDRATASE"/>
    <property type="match status" value="1"/>
</dbReference>
<dbReference type="PANTHER" id="PTHR11458:SF0">
    <property type="entry name" value="DELTA-AMINOLEVULINIC ACID DEHYDRATASE"/>
    <property type="match status" value="1"/>
</dbReference>
<dbReference type="Pfam" id="PF00490">
    <property type="entry name" value="ALAD"/>
    <property type="match status" value="1"/>
</dbReference>
<dbReference type="PIRSF" id="PIRSF001415">
    <property type="entry name" value="Porphbilin_synth"/>
    <property type="match status" value="1"/>
</dbReference>
<dbReference type="PRINTS" id="PR00144">
    <property type="entry name" value="DALDHYDRTASE"/>
</dbReference>
<dbReference type="SMART" id="SM01004">
    <property type="entry name" value="ALAD"/>
    <property type="match status" value="1"/>
</dbReference>
<dbReference type="SUPFAM" id="SSF51569">
    <property type="entry name" value="Aldolase"/>
    <property type="match status" value="1"/>
</dbReference>
<dbReference type="PROSITE" id="PS00169">
    <property type="entry name" value="D_ALA_DEHYDRATASE"/>
    <property type="match status" value="1"/>
</dbReference>
<protein>
    <recommendedName>
        <fullName>Delta-aminolevulinic acid dehydratase</fullName>
        <shortName>ALADH</shortName>
        <ecNumber>4.2.1.24</ecNumber>
    </recommendedName>
    <alternativeName>
        <fullName>Porphobilinogen synthase</fullName>
    </alternativeName>
</protein>
<accession>Q750E0</accession>
<gene>
    <name type="primary">HEM2</name>
    <name type="ordered locus">AGR015C</name>
</gene>